<dbReference type="EC" id="6.3.1.2" evidence="4"/>
<dbReference type="EMBL" id="U58138">
    <property type="protein sequence ID" value="AAB41959.1"/>
    <property type="molecule type" value="Genomic_DNA"/>
</dbReference>
<dbReference type="RefSeq" id="WP_006123962.1">
    <property type="nucleotide sequence ID" value="NZ_CP098609.1"/>
</dbReference>
<dbReference type="SMR" id="P77958"/>
<dbReference type="GO" id="GO:0005737">
    <property type="term" value="C:cytoplasm"/>
    <property type="evidence" value="ECO:0007669"/>
    <property type="project" value="UniProtKB-SubCell"/>
</dbReference>
<dbReference type="GO" id="GO:0016020">
    <property type="term" value="C:membrane"/>
    <property type="evidence" value="ECO:0007669"/>
    <property type="project" value="TreeGrafter"/>
</dbReference>
<dbReference type="GO" id="GO:0005524">
    <property type="term" value="F:ATP binding"/>
    <property type="evidence" value="ECO:0007669"/>
    <property type="project" value="UniProtKB-KW"/>
</dbReference>
<dbReference type="GO" id="GO:0004356">
    <property type="term" value="F:glutamine synthetase activity"/>
    <property type="evidence" value="ECO:0007669"/>
    <property type="project" value="UniProtKB-EC"/>
</dbReference>
<dbReference type="GO" id="GO:0046872">
    <property type="term" value="F:metal ion binding"/>
    <property type="evidence" value="ECO:0007669"/>
    <property type="project" value="UniProtKB-KW"/>
</dbReference>
<dbReference type="GO" id="GO:0006542">
    <property type="term" value="P:glutamine biosynthetic process"/>
    <property type="evidence" value="ECO:0007669"/>
    <property type="project" value="InterPro"/>
</dbReference>
<dbReference type="GO" id="GO:0019740">
    <property type="term" value="P:nitrogen utilization"/>
    <property type="evidence" value="ECO:0007669"/>
    <property type="project" value="TreeGrafter"/>
</dbReference>
<dbReference type="FunFam" id="3.10.20.70:FF:000006">
    <property type="entry name" value="Glutamine synthetase"/>
    <property type="match status" value="1"/>
</dbReference>
<dbReference type="FunFam" id="3.30.590.10:FF:000001">
    <property type="entry name" value="Glutamine synthetase"/>
    <property type="match status" value="1"/>
</dbReference>
<dbReference type="Gene3D" id="3.10.20.70">
    <property type="entry name" value="Glutamine synthetase, N-terminal domain"/>
    <property type="match status" value="1"/>
</dbReference>
<dbReference type="Gene3D" id="3.30.590.10">
    <property type="entry name" value="Glutamine synthetase/guanido kinase, catalytic domain"/>
    <property type="match status" value="1"/>
</dbReference>
<dbReference type="InterPro" id="IPR008147">
    <property type="entry name" value="Gln_synt_N"/>
</dbReference>
<dbReference type="InterPro" id="IPR036651">
    <property type="entry name" value="Gln_synt_N_sf"/>
</dbReference>
<dbReference type="InterPro" id="IPR014746">
    <property type="entry name" value="Gln_synth/guanido_kin_cat_dom"/>
</dbReference>
<dbReference type="InterPro" id="IPR008146">
    <property type="entry name" value="Gln_synth_cat_dom"/>
</dbReference>
<dbReference type="InterPro" id="IPR027303">
    <property type="entry name" value="Gln_synth_gly_rich_site"/>
</dbReference>
<dbReference type="InterPro" id="IPR004809">
    <property type="entry name" value="Gln_synth_I"/>
</dbReference>
<dbReference type="InterPro" id="IPR001637">
    <property type="entry name" value="Gln_synth_I_adenylation_site"/>
</dbReference>
<dbReference type="InterPro" id="IPR027302">
    <property type="entry name" value="Gln_synth_N_conserv_site"/>
</dbReference>
<dbReference type="NCBIfam" id="TIGR00653">
    <property type="entry name" value="GlnA"/>
    <property type="match status" value="1"/>
</dbReference>
<dbReference type="PANTHER" id="PTHR43407">
    <property type="entry name" value="GLUTAMINE SYNTHETASE"/>
    <property type="match status" value="1"/>
</dbReference>
<dbReference type="PANTHER" id="PTHR43407:SF1">
    <property type="entry name" value="LENGSIN"/>
    <property type="match status" value="1"/>
</dbReference>
<dbReference type="Pfam" id="PF00120">
    <property type="entry name" value="Gln-synt_C"/>
    <property type="match status" value="1"/>
</dbReference>
<dbReference type="Pfam" id="PF03951">
    <property type="entry name" value="Gln-synt_N"/>
    <property type="match status" value="1"/>
</dbReference>
<dbReference type="SMART" id="SM01230">
    <property type="entry name" value="Gln-synt_C"/>
    <property type="match status" value="1"/>
</dbReference>
<dbReference type="SUPFAM" id="SSF54368">
    <property type="entry name" value="Glutamine synthetase, N-terminal domain"/>
    <property type="match status" value="1"/>
</dbReference>
<dbReference type="SUPFAM" id="SSF55931">
    <property type="entry name" value="Glutamine synthetase/guanido kinase"/>
    <property type="match status" value="1"/>
</dbReference>
<dbReference type="PROSITE" id="PS00180">
    <property type="entry name" value="GLNA_1"/>
    <property type="match status" value="1"/>
</dbReference>
<dbReference type="PROSITE" id="PS00182">
    <property type="entry name" value="GLNA_ADENYLATION"/>
    <property type="match status" value="1"/>
</dbReference>
<dbReference type="PROSITE" id="PS00181">
    <property type="entry name" value="GLNA_ATP"/>
    <property type="match status" value="1"/>
</dbReference>
<dbReference type="PROSITE" id="PS51986">
    <property type="entry name" value="GS_BETA_GRASP"/>
    <property type="match status" value="1"/>
</dbReference>
<dbReference type="PROSITE" id="PS51987">
    <property type="entry name" value="GS_CATALYTIC"/>
    <property type="match status" value="1"/>
</dbReference>
<gene>
    <name evidence="4" type="primary">glnA</name>
</gene>
<name>GLN1B_STRFL</name>
<feature type="chain" id="PRO_0000153268" description="Glutamine synthetase">
    <location>
        <begin position="1"/>
        <end position="469"/>
    </location>
</feature>
<feature type="domain" description="GS beta-grasp" evidence="5">
    <location>
        <begin position="15"/>
        <end position="96"/>
    </location>
</feature>
<feature type="domain" description="GS catalytic" evidence="6">
    <location>
        <begin position="104"/>
        <end position="469"/>
    </location>
</feature>
<feature type="binding site" evidence="4">
    <location>
        <position position="129"/>
    </location>
    <ligand>
        <name>Mg(2+)</name>
        <dbReference type="ChEBI" id="CHEBI:18420"/>
        <label>1</label>
    </ligand>
</feature>
<feature type="binding site" evidence="4">
    <location>
        <position position="131"/>
    </location>
    <ligand>
        <name>Mg(2+)</name>
        <dbReference type="ChEBI" id="CHEBI:18420"/>
        <label>2</label>
    </ligand>
</feature>
<feature type="binding site" evidence="4">
    <location>
        <position position="205"/>
    </location>
    <ligand>
        <name>ATP</name>
        <dbReference type="ChEBI" id="CHEBI:30616"/>
    </ligand>
</feature>
<feature type="binding site" evidence="4">
    <location>
        <position position="210"/>
    </location>
    <ligand>
        <name>Mg(2+)</name>
        <dbReference type="ChEBI" id="CHEBI:18420"/>
        <label>2</label>
    </ligand>
</feature>
<feature type="binding site" evidence="4">
    <location>
        <position position="218"/>
    </location>
    <ligand>
        <name>Mg(2+)</name>
        <dbReference type="ChEBI" id="CHEBI:18420"/>
        <label>2</label>
    </ligand>
</feature>
<feature type="binding site" evidence="4">
    <location>
        <begin position="221"/>
        <end position="223"/>
    </location>
    <ligand>
        <name>ATP</name>
        <dbReference type="ChEBI" id="CHEBI:30616"/>
    </ligand>
</feature>
<feature type="binding site" evidence="4">
    <location>
        <begin position="262"/>
        <end position="263"/>
    </location>
    <ligand>
        <name>L-glutamate</name>
        <dbReference type="ChEBI" id="CHEBI:29985"/>
    </ligand>
</feature>
<feature type="binding site" evidence="2">
    <location>
        <position position="263"/>
    </location>
    <ligand>
        <name>L-glutamate</name>
        <dbReference type="ChEBI" id="CHEBI:29985"/>
    </ligand>
</feature>
<feature type="binding site" evidence="4">
    <location>
        <position position="267"/>
    </location>
    <ligand>
        <name>Mg(2+)</name>
        <dbReference type="ChEBI" id="CHEBI:18420"/>
        <label>1</label>
    </ligand>
</feature>
<feature type="binding site" evidence="4">
    <location>
        <begin position="269"/>
        <end position="271"/>
    </location>
    <ligand>
        <name>ATP</name>
        <dbReference type="ChEBI" id="CHEBI:30616"/>
    </ligand>
</feature>
<feature type="binding site" evidence="3">
    <location>
        <position position="271"/>
    </location>
    <ligand>
        <name>ATP</name>
        <dbReference type="ChEBI" id="CHEBI:30616"/>
    </ligand>
</feature>
<feature type="binding site" evidence="4">
    <location>
        <position position="320"/>
    </location>
    <ligand>
        <name>L-glutamate</name>
        <dbReference type="ChEBI" id="CHEBI:29985"/>
    </ligand>
</feature>
<feature type="binding site" evidence="1">
    <location>
        <position position="326"/>
    </location>
    <ligand>
        <name>L-glutamate</name>
        <dbReference type="ChEBI" id="CHEBI:29985"/>
    </ligand>
</feature>
<feature type="binding site" evidence="4">
    <location>
        <position position="338"/>
    </location>
    <ligand>
        <name>ATP</name>
        <dbReference type="ChEBI" id="CHEBI:30616"/>
    </ligand>
</feature>
<feature type="binding site" evidence="4">
    <location>
        <position position="338"/>
    </location>
    <ligand>
        <name>L-glutamate</name>
        <dbReference type="ChEBI" id="CHEBI:29985"/>
    </ligand>
</feature>
<feature type="binding site" evidence="4">
    <location>
        <position position="343"/>
    </location>
    <ligand>
        <name>ATP</name>
        <dbReference type="ChEBI" id="CHEBI:30616"/>
    </ligand>
</feature>
<feature type="binding site" evidence="3">
    <location>
        <position position="352"/>
    </location>
    <ligand>
        <name>ATP</name>
        <dbReference type="ChEBI" id="CHEBI:30616"/>
    </ligand>
</feature>
<feature type="binding site" evidence="4">
    <location>
        <position position="357"/>
    </location>
    <ligand>
        <name>Mg(2+)</name>
        <dbReference type="ChEBI" id="CHEBI:18420"/>
        <label>1</label>
    </ligand>
</feature>
<feature type="binding site" evidence="4">
    <location>
        <position position="359"/>
    </location>
    <ligand>
        <name>L-glutamate</name>
        <dbReference type="ChEBI" id="CHEBI:29985"/>
    </ligand>
</feature>
<feature type="modified residue" description="O-AMP-tyrosine" evidence="4">
    <location>
        <position position="397"/>
    </location>
</feature>
<accession>P77958</accession>
<sequence length="469" mass="52514">MFQNADEVQKYVADNDVKFIDVRFCDLPGVMQHFTIPAATFDPAEELAFDGSSIRGFQAIHESDMALRADLSTARVDPFRRDKTININFFIHDPITGEQYSRDPRNIAKKAEAYLASTGIADTAYFGPEAEFYVFDNVRFQTSANESFYHIDSEAGAWNTGAVENNRGYKVRYKGGYFPAPPVDHFADLRAEISLELDKNGLQVERQHHEVGTAGQAEINYKFNTLLAAADDLMLFKYIVKNVAWRNGKTATFMPKPIFGDNGSGMHVHQSLWQGGSPLFYDEQGYAGLSDTARYYIGGILKHAPSLLAFTNPTVNSYHRLVPGFEAPVNMVYSQRNRSAAMRIPITGSNPKAKRVEFRAPDPSSNPYLAFSALLMAGLDGVKNKIEPAEPIDKDLYELAPEEHANVQQVPTSLPAVLDALEADNEYLQAGGVFTSDLIETWIDYKRTNEIAPIQLRPHPHEFELYFDI</sequence>
<proteinExistence type="inferred from homology"/>
<protein>
    <recommendedName>
        <fullName evidence="4">Glutamine synthetase</fullName>
        <shortName evidence="4">GS</shortName>
        <ecNumber evidence="4">6.3.1.2</ecNumber>
    </recommendedName>
    <alternativeName>
        <fullName evidence="4">Glutamate--ammonia ligase</fullName>
    </alternativeName>
    <alternativeName>
        <fullName evidence="4">Glutamine synthetase I beta</fullName>
        <shortName evidence="4">GSI beta</shortName>
    </alternativeName>
</protein>
<organism>
    <name type="scientific">Streptomyces filamentosus</name>
    <name type="common">Streptomyces roseosporus</name>
    <dbReference type="NCBI Taxonomy" id="67294"/>
    <lineage>
        <taxon>Bacteria</taxon>
        <taxon>Bacillati</taxon>
        <taxon>Actinomycetota</taxon>
        <taxon>Actinomycetes</taxon>
        <taxon>Kitasatosporales</taxon>
        <taxon>Streptomycetaceae</taxon>
        <taxon>Streptomyces</taxon>
    </lineage>
</organism>
<keyword id="KW-0067">ATP-binding</keyword>
<keyword id="KW-0963">Cytoplasm</keyword>
<keyword id="KW-0436">Ligase</keyword>
<keyword id="KW-0460">Magnesium</keyword>
<keyword id="KW-0479">Metal-binding</keyword>
<keyword id="KW-0547">Nucleotide-binding</keyword>
<keyword id="KW-0597">Phosphoprotein</keyword>
<comment type="function">
    <text evidence="4">Catalyzes the ATP-dependent biosynthesis of glutamine from glutamate and ammonia.</text>
</comment>
<comment type="catalytic activity">
    <reaction evidence="4">
        <text>L-glutamate + NH4(+) + ATP = L-glutamine + ADP + phosphate + H(+)</text>
        <dbReference type="Rhea" id="RHEA:16169"/>
        <dbReference type="ChEBI" id="CHEBI:15378"/>
        <dbReference type="ChEBI" id="CHEBI:28938"/>
        <dbReference type="ChEBI" id="CHEBI:29985"/>
        <dbReference type="ChEBI" id="CHEBI:30616"/>
        <dbReference type="ChEBI" id="CHEBI:43474"/>
        <dbReference type="ChEBI" id="CHEBI:58359"/>
        <dbReference type="ChEBI" id="CHEBI:456216"/>
        <dbReference type="EC" id="6.3.1.2"/>
    </reaction>
</comment>
<comment type="cofactor">
    <cofactor evidence="4">
        <name>Mg(2+)</name>
        <dbReference type="ChEBI" id="CHEBI:18420"/>
    </cofactor>
    <text evidence="4">Binds 2 Mg(2+) ions per subunit.</text>
</comment>
<comment type="activity regulation">
    <text evidence="4">The activity of this enzyme could be controlled by adenylation under conditions of abundant glutamine.</text>
</comment>
<comment type="subunit">
    <text evidence="4">Oligomer of 12 subunits arranged in the form of two hexagons.</text>
</comment>
<comment type="subcellular location">
    <subcellularLocation>
        <location evidence="4">Cytoplasm</location>
    </subcellularLocation>
</comment>
<comment type="similarity">
    <text evidence="4">Belongs to the glutamine synthetase family.</text>
</comment>
<evidence type="ECO:0000250" key="1">
    <source>
        <dbReference type="UniProtKB" id="P0A1P6"/>
    </source>
</evidence>
<evidence type="ECO:0000250" key="2">
    <source>
        <dbReference type="UniProtKB" id="P12425"/>
    </source>
</evidence>
<evidence type="ECO:0000250" key="3">
    <source>
        <dbReference type="UniProtKB" id="P77961"/>
    </source>
</evidence>
<evidence type="ECO:0000250" key="4">
    <source>
        <dbReference type="UniProtKB" id="P9WN39"/>
    </source>
</evidence>
<evidence type="ECO:0000255" key="5">
    <source>
        <dbReference type="PROSITE-ProRule" id="PRU01330"/>
    </source>
</evidence>
<evidence type="ECO:0000255" key="6">
    <source>
        <dbReference type="PROSITE-ProRule" id="PRU01331"/>
    </source>
</evidence>
<reference key="1">
    <citation type="journal article" date="1996" name="Microbiology">
        <title>Mutants of Streptomyces roseosporus that express enhanced recombination within partially homologous genes.</title>
        <authorList>
            <person name="Hosted T.J."/>
            <person name="Baltz R.H."/>
        </authorList>
    </citation>
    <scope>NUCLEOTIDE SEQUENCE [GENOMIC DNA]</scope>
    <source>
        <strain>A54145.3</strain>
    </source>
</reference>